<reference key="1">
    <citation type="journal article" date="2008" name="J. Bacteriol.">
        <title>Genome sequence of a nephritogenic and highly transformable M49 strain of Streptococcus pyogenes.</title>
        <authorList>
            <person name="McShan W.M."/>
            <person name="Ferretti J.J."/>
            <person name="Karasawa T."/>
            <person name="Suvorov A.N."/>
            <person name="Lin S."/>
            <person name="Qin B."/>
            <person name="Jia H."/>
            <person name="Kenton S."/>
            <person name="Najar F."/>
            <person name="Wu H."/>
            <person name="Scott J."/>
            <person name="Roe B.A."/>
            <person name="Savic D.J."/>
        </authorList>
    </citation>
    <scope>NUCLEOTIDE SEQUENCE [LARGE SCALE GENOMIC DNA]</scope>
    <source>
        <strain>NZ131</strain>
    </source>
</reference>
<organism>
    <name type="scientific">Streptococcus pyogenes serotype M49 (strain NZ131)</name>
    <dbReference type="NCBI Taxonomy" id="471876"/>
    <lineage>
        <taxon>Bacteria</taxon>
        <taxon>Bacillati</taxon>
        <taxon>Bacillota</taxon>
        <taxon>Bacilli</taxon>
        <taxon>Lactobacillales</taxon>
        <taxon>Streptococcaceae</taxon>
        <taxon>Streptococcus</taxon>
    </lineage>
</organism>
<gene>
    <name evidence="1" type="primary">proB</name>
    <name type="ordered locus">Spy49_1296c</name>
</gene>
<sequence>MMKRQFEDVTRIVIKIGTSSLVLPTGKINLEKIDQLAFVISSLMNKGKEVILVSSGAMGFGLDILKMEKRPTNLAKQQAVSSVGQVAMMSLYSQIFAHYQTNVSQILLTRDVVVFPESLANVTNAFESLISLGIVPIVNENDAVSVDEMDHATKFGDNDRLSAVVAGITKADLLIMLSDIDGLFDKNPTIYEDAQLRSHVAVITQEIIASAGGAGSKFGTGGMLSKIQSAQMVFENKGQMVLMNGANPRDILRVLEGQLLGTWFKQIEEVRHD</sequence>
<keyword id="KW-0028">Amino-acid biosynthesis</keyword>
<keyword id="KW-0067">ATP-binding</keyword>
<keyword id="KW-0963">Cytoplasm</keyword>
<keyword id="KW-0418">Kinase</keyword>
<keyword id="KW-0547">Nucleotide-binding</keyword>
<keyword id="KW-0641">Proline biosynthesis</keyword>
<keyword id="KW-0808">Transferase</keyword>
<accession>B5XML6</accession>
<dbReference type="EC" id="2.7.2.11" evidence="1"/>
<dbReference type="EMBL" id="CP000829">
    <property type="protein sequence ID" value="ACI61578.1"/>
    <property type="molecule type" value="Genomic_DNA"/>
</dbReference>
<dbReference type="SMR" id="B5XML6"/>
<dbReference type="KEGG" id="soz:Spy49_1296c"/>
<dbReference type="HOGENOM" id="CLU_025400_0_2_9"/>
<dbReference type="UniPathway" id="UPA00098">
    <property type="reaction ID" value="UER00359"/>
</dbReference>
<dbReference type="Proteomes" id="UP000001039">
    <property type="component" value="Chromosome"/>
</dbReference>
<dbReference type="GO" id="GO:0005829">
    <property type="term" value="C:cytosol"/>
    <property type="evidence" value="ECO:0007669"/>
    <property type="project" value="TreeGrafter"/>
</dbReference>
<dbReference type="GO" id="GO:0005524">
    <property type="term" value="F:ATP binding"/>
    <property type="evidence" value="ECO:0007669"/>
    <property type="project" value="UniProtKB-KW"/>
</dbReference>
<dbReference type="GO" id="GO:0004349">
    <property type="term" value="F:glutamate 5-kinase activity"/>
    <property type="evidence" value="ECO:0007669"/>
    <property type="project" value="UniProtKB-UniRule"/>
</dbReference>
<dbReference type="GO" id="GO:0055129">
    <property type="term" value="P:L-proline biosynthetic process"/>
    <property type="evidence" value="ECO:0007669"/>
    <property type="project" value="UniProtKB-UniRule"/>
</dbReference>
<dbReference type="CDD" id="cd04242">
    <property type="entry name" value="AAK_G5K_ProB"/>
    <property type="match status" value="1"/>
</dbReference>
<dbReference type="FunFam" id="3.40.1160.10:FF:000006">
    <property type="entry name" value="Glutamate 5-kinase"/>
    <property type="match status" value="1"/>
</dbReference>
<dbReference type="Gene3D" id="3.40.1160.10">
    <property type="entry name" value="Acetylglutamate kinase-like"/>
    <property type="match status" value="1"/>
</dbReference>
<dbReference type="HAMAP" id="MF_00456">
    <property type="entry name" value="ProB"/>
    <property type="match status" value="1"/>
</dbReference>
<dbReference type="InterPro" id="IPR036393">
    <property type="entry name" value="AceGlu_kinase-like_sf"/>
</dbReference>
<dbReference type="InterPro" id="IPR001048">
    <property type="entry name" value="Asp/Glu/Uridylate_kinase"/>
</dbReference>
<dbReference type="InterPro" id="IPR041739">
    <property type="entry name" value="G5K_ProB"/>
</dbReference>
<dbReference type="InterPro" id="IPR001057">
    <property type="entry name" value="Glu/AcGlu_kinase"/>
</dbReference>
<dbReference type="InterPro" id="IPR011529">
    <property type="entry name" value="Glu_5kinase"/>
</dbReference>
<dbReference type="InterPro" id="IPR005715">
    <property type="entry name" value="Glu_5kinase/COase_Synthase"/>
</dbReference>
<dbReference type="InterPro" id="IPR019797">
    <property type="entry name" value="Glutamate_5-kinase_CS"/>
</dbReference>
<dbReference type="NCBIfam" id="TIGR01027">
    <property type="entry name" value="proB"/>
    <property type="match status" value="1"/>
</dbReference>
<dbReference type="PANTHER" id="PTHR43654">
    <property type="entry name" value="GLUTAMATE 5-KINASE"/>
    <property type="match status" value="1"/>
</dbReference>
<dbReference type="PANTHER" id="PTHR43654:SF1">
    <property type="entry name" value="ISOPENTENYL PHOSPHATE KINASE"/>
    <property type="match status" value="1"/>
</dbReference>
<dbReference type="Pfam" id="PF00696">
    <property type="entry name" value="AA_kinase"/>
    <property type="match status" value="1"/>
</dbReference>
<dbReference type="PIRSF" id="PIRSF000729">
    <property type="entry name" value="GK"/>
    <property type="match status" value="1"/>
</dbReference>
<dbReference type="PRINTS" id="PR00474">
    <property type="entry name" value="GLU5KINASE"/>
</dbReference>
<dbReference type="SUPFAM" id="SSF53633">
    <property type="entry name" value="Carbamate kinase-like"/>
    <property type="match status" value="1"/>
</dbReference>
<dbReference type="PROSITE" id="PS00902">
    <property type="entry name" value="GLUTAMATE_5_KINASE"/>
    <property type="match status" value="1"/>
</dbReference>
<proteinExistence type="inferred from homology"/>
<name>PROB_STRPZ</name>
<evidence type="ECO:0000255" key="1">
    <source>
        <dbReference type="HAMAP-Rule" id="MF_00456"/>
    </source>
</evidence>
<protein>
    <recommendedName>
        <fullName evidence="1">Glutamate 5-kinase</fullName>
        <ecNumber evidence="1">2.7.2.11</ecNumber>
    </recommendedName>
    <alternativeName>
        <fullName evidence="1">Gamma-glutamyl kinase</fullName>
        <shortName evidence="1">GK</shortName>
    </alternativeName>
</protein>
<feature type="chain" id="PRO_1000125268" description="Glutamate 5-kinase">
    <location>
        <begin position="1"/>
        <end position="273"/>
    </location>
</feature>
<feature type="binding site" evidence="1">
    <location>
        <position position="15"/>
    </location>
    <ligand>
        <name>ATP</name>
        <dbReference type="ChEBI" id="CHEBI:30616"/>
    </ligand>
</feature>
<feature type="binding site" evidence="1">
    <location>
        <position position="55"/>
    </location>
    <ligand>
        <name>substrate</name>
    </ligand>
</feature>
<feature type="binding site" evidence="1">
    <location>
        <position position="142"/>
    </location>
    <ligand>
        <name>substrate</name>
    </ligand>
</feature>
<feature type="binding site" evidence="1">
    <location>
        <position position="158"/>
    </location>
    <ligand>
        <name>substrate</name>
    </ligand>
</feature>
<feature type="binding site" evidence="1">
    <location>
        <begin position="178"/>
        <end position="179"/>
    </location>
    <ligand>
        <name>ATP</name>
        <dbReference type="ChEBI" id="CHEBI:30616"/>
    </ligand>
</feature>
<feature type="binding site" evidence="1">
    <location>
        <begin position="220"/>
        <end position="226"/>
    </location>
    <ligand>
        <name>ATP</name>
        <dbReference type="ChEBI" id="CHEBI:30616"/>
    </ligand>
</feature>
<comment type="function">
    <text evidence="1">Catalyzes the transfer of a phosphate group to glutamate to form L-glutamate 5-phosphate.</text>
</comment>
<comment type="catalytic activity">
    <reaction evidence="1">
        <text>L-glutamate + ATP = L-glutamyl 5-phosphate + ADP</text>
        <dbReference type="Rhea" id="RHEA:14877"/>
        <dbReference type="ChEBI" id="CHEBI:29985"/>
        <dbReference type="ChEBI" id="CHEBI:30616"/>
        <dbReference type="ChEBI" id="CHEBI:58274"/>
        <dbReference type="ChEBI" id="CHEBI:456216"/>
        <dbReference type="EC" id="2.7.2.11"/>
    </reaction>
</comment>
<comment type="pathway">
    <text evidence="1">Amino-acid biosynthesis; L-proline biosynthesis; L-glutamate 5-semialdehyde from L-glutamate: step 1/2.</text>
</comment>
<comment type="subcellular location">
    <subcellularLocation>
        <location evidence="1">Cytoplasm</location>
    </subcellularLocation>
</comment>
<comment type="similarity">
    <text evidence="1">Belongs to the glutamate 5-kinase family.</text>
</comment>